<name>PAND_VESOH</name>
<sequence length="127" mass="13815">MKRIFLSAKLHKVTTTAVELNYEGSCEIDGVLLDAAGIGAFEQIQIYNINNGNRFTTYTILGKDNSGIISVNGAAARKVNVGDVLIIAAYALYSEEELEGYAPRLCYVNNKNILTKISTGSKKSSLY</sequence>
<dbReference type="EC" id="4.1.1.11" evidence="1"/>
<dbReference type="EMBL" id="AP009247">
    <property type="protein sequence ID" value="BAF61878.1"/>
    <property type="molecule type" value="Genomic_DNA"/>
</dbReference>
<dbReference type="RefSeq" id="WP_011930147.1">
    <property type="nucleotide sequence ID" value="NC_009465.1"/>
</dbReference>
<dbReference type="SMR" id="A5CW02"/>
<dbReference type="STRING" id="412965.COSY_0771"/>
<dbReference type="KEGG" id="vok:COSY_0771"/>
<dbReference type="eggNOG" id="COG0853">
    <property type="taxonomic scope" value="Bacteria"/>
</dbReference>
<dbReference type="HOGENOM" id="CLU_115305_2_1_6"/>
<dbReference type="OrthoDB" id="9803983at2"/>
<dbReference type="UniPathway" id="UPA00028">
    <property type="reaction ID" value="UER00002"/>
</dbReference>
<dbReference type="Proteomes" id="UP000000247">
    <property type="component" value="Chromosome"/>
</dbReference>
<dbReference type="GO" id="GO:0005829">
    <property type="term" value="C:cytosol"/>
    <property type="evidence" value="ECO:0007669"/>
    <property type="project" value="TreeGrafter"/>
</dbReference>
<dbReference type="GO" id="GO:0004068">
    <property type="term" value="F:aspartate 1-decarboxylase activity"/>
    <property type="evidence" value="ECO:0007669"/>
    <property type="project" value="UniProtKB-UniRule"/>
</dbReference>
<dbReference type="GO" id="GO:0006523">
    <property type="term" value="P:alanine biosynthetic process"/>
    <property type="evidence" value="ECO:0007669"/>
    <property type="project" value="InterPro"/>
</dbReference>
<dbReference type="GO" id="GO:0015940">
    <property type="term" value="P:pantothenate biosynthetic process"/>
    <property type="evidence" value="ECO:0007669"/>
    <property type="project" value="UniProtKB-UniRule"/>
</dbReference>
<dbReference type="CDD" id="cd06919">
    <property type="entry name" value="Asp_decarbox"/>
    <property type="match status" value="1"/>
</dbReference>
<dbReference type="Gene3D" id="2.40.40.20">
    <property type="match status" value="1"/>
</dbReference>
<dbReference type="HAMAP" id="MF_00446">
    <property type="entry name" value="PanD"/>
    <property type="match status" value="1"/>
</dbReference>
<dbReference type="InterPro" id="IPR009010">
    <property type="entry name" value="Asp_de-COase-like_dom_sf"/>
</dbReference>
<dbReference type="InterPro" id="IPR003190">
    <property type="entry name" value="Asp_decarbox"/>
</dbReference>
<dbReference type="NCBIfam" id="TIGR00223">
    <property type="entry name" value="panD"/>
    <property type="match status" value="1"/>
</dbReference>
<dbReference type="PANTHER" id="PTHR21012">
    <property type="entry name" value="ASPARTATE 1-DECARBOXYLASE"/>
    <property type="match status" value="1"/>
</dbReference>
<dbReference type="PANTHER" id="PTHR21012:SF0">
    <property type="entry name" value="ASPARTATE 1-DECARBOXYLASE"/>
    <property type="match status" value="1"/>
</dbReference>
<dbReference type="Pfam" id="PF02261">
    <property type="entry name" value="Asp_decarbox"/>
    <property type="match status" value="1"/>
</dbReference>
<dbReference type="PIRSF" id="PIRSF006246">
    <property type="entry name" value="Asp_decarbox"/>
    <property type="match status" value="1"/>
</dbReference>
<dbReference type="SUPFAM" id="SSF50692">
    <property type="entry name" value="ADC-like"/>
    <property type="match status" value="1"/>
</dbReference>
<protein>
    <recommendedName>
        <fullName evidence="1">Aspartate 1-decarboxylase</fullName>
        <ecNumber evidence="1">4.1.1.11</ecNumber>
    </recommendedName>
    <alternativeName>
        <fullName evidence="1">Aspartate alpha-decarboxylase</fullName>
    </alternativeName>
    <component>
        <recommendedName>
            <fullName evidence="1">Aspartate 1-decarboxylase beta chain</fullName>
        </recommendedName>
    </component>
    <component>
        <recommendedName>
            <fullName evidence="1">Aspartate 1-decarboxylase alpha chain</fullName>
        </recommendedName>
    </component>
</protein>
<accession>A5CW02</accession>
<comment type="function">
    <text evidence="1">Catalyzes the pyruvoyl-dependent decarboxylation of aspartate to produce beta-alanine.</text>
</comment>
<comment type="catalytic activity">
    <reaction evidence="1">
        <text>L-aspartate + H(+) = beta-alanine + CO2</text>
        <dbReference type="Rhea" id="RHEA:19497"/>
        <dbReference type="ChEBI" id="CHEBI:15378"/>
        <dbReference type="ChEBI" id="CHEBI:16526"/>
        <dbReference type="ChEBI" id="CHEBI:29991"/>
        <dbReference type="ChEBI" id="CHEBI:57966"/>
        <dbReference type="EC" id="4.1.1.11"/>
    </reaction>
</comment>
<comment type="cofactor">
    <cofactor evidence="1">
        <name>pyruvate</name>
        <dbReference type="ChEBI" id="CHEBI:15361"/>
    </cofactor>
    <text evidence="1">Binds 1 pyruvoyl group covalently per subunit.</text>
</comment>
<comment type="pathway">
    <text evidence="1">Cofactor biosynthesis; (R)-pantothenate biosynthesis; beta-alanine from L-aspartate: step 1/1.</text>
</comment>
<comment type="subunit">
    <text evidence="1">Heterooctamer of four alpha and four beta subunits.</text>
</comment>
<comment type="subcellular location">
    <subcellularLocation>
        <location evidence="1">Cytoplasm</location>
    </subcellularLocation>
</comment>
<comment type="PTM">
    <text evidence="1">Is synthesized initially as an inactive proenzyme, which is activated by self-cleavage at a specific serine bond to produce a beta-subunit with a hydroxyl group at its C-terminus and an alpha-subunit with a pyruvoyl group at its N-terminus.</text>
</comment>
<comment type="similarity">
    <text evidence="1">Belongs to the PanD family.</text>
</comment>
<gene>
    <name evidence="1" type="primary">panD</name>
    <name type="ordered locus">COSY_0771</name>
</gene>
<organism>
    <name type="scientific">Vesicomyosocius okutanii subsp. Calyptogena okutanii (strain HA)</name>
    <dbReference type="NCBI Taxonomy" id="412965"/>
    <lineage>
        <taxon>Bacteria</taxon>
        <taxon>Pseudomonadati</taxon>
        <taxon>Pseudomonadota</taxon>
        <taxon>Gammaproteobacteria</taxon>
        <taxon>Candidatus Pseudothioglobaceae</taxon>
        <taxon>Candidatus Vesicomyosocius</taxon>
    </lineage>
</organism>
<proteinExistence type="inferred from homology"/>
<feature type="chain" id="PRO_0000307079" description="Aspartate 1-decarboxylase beta chain" evidence="1">
    <location>
        <begin position="1"/>
        <end position="24"/>
    </location>
</feature>
<feature type="chain" id="PRO_0000307080" description="Aspartate 1-decarboxylase alpha chain" evidence="1">
    <location>
        <begin position="25"/>
        <end position="127"/>
    </location>
</feature>
<feature type="active site" description="Schiff-base intermediate with substrate; via pyruvic acid" evidence="1">
    <location>
        <position position="25"/>
    </location>
</feature>
<feature type="active site" description="Proton donor" evidence="1">
    <location>
        <position position="58"/>
    </location>
</feature>
<feature type="binding site" evidence="1">
    <location>
        <position position="57"/>
    </location>
    <ligand>
        <name>substrate</name>
    </ligand>
</feature>
<feature type="binding site" evidence="1">
    <location>
        <begin position="73"/>
        <end position="75"/>
    </location>
    <ligand>
        <name>substrate</name>
    </ligand>
</feature>
<feature type="modified residue" description="Pyruvic acid (Ser)" evidence="1">
    <location>
        <position position="25"/>
    </location>
</feature>
<evidence type="ECO:0000255" key="1">
    <source>
        <dbReference type="HAMAP-Rule" id="MF_00446"/>
    </source>
</evidence>
<reference key="1">
    <citation type="journal article" date="2007" name="Curr. Biol.">
        <title>Reduced genome of the thioautotrophic intracellular symbiont in a deep-sea clam, Calyptogena okutanii.</title>
        <authorList>
            <person name="Kuwahara H."/>
            <person name="Yoshida T."/>
            <person name="Takaki Y."/>
            <person name="Shimamura S."/>
            <person name="Nishi S."/>
            <person name="Harada M."/>
            <person name="Matsuyama K."/>
            <person name="Takishita K."/>
            <person name="Kawato M."/>
            <person name="Uematsu K."/>
            <person name="Fujiwara Y."/>
            <person name="Sato T."/>
            <person name="Kato C."/>
            <person name="Kitagawa M."/>
            <person name="Kato I."/>
            <person name="Maruyama T."/>
        </authorList>
    </citation>
    <scope>NUCLEOTIDE SEQUENCE [LARGE SCALE GENOMIC DNA]</scope>
    <source>
        <strain>HA</strain>
    </source>
</reference>
<keyword id="KW-0068">Autocatalytic cleavage</keyword>
<keyword id="KW-0963">Cytoplasm</keyword>
<keyword id="KW-0210">Decarboxylase</keyword>
<keyword id="KW-0456">Lyase</keyword>
<keyword id="KW-0566">Pantothenate biosynthesis</keyword>
<keyword id="KW-0670">Pyruvate</keyword>
<keyword id="KW-1185">Reference proteome</keyword>
<keyword id="KW-0704">Schiff base</keyword>
<keyword id="KW-0865">Zymogen</keyword>